<geneLocation type="plasmid">
    <name>pXO2</name>
</geneLocation>
<reference key="1">
    <citation type="journal article" date="1999" name="J. Appl. Microbiol.">
        <title>Sequence, assembly and analysis of pXO1 and pXO2.</title>
        <authorList>
            <person name="Okinaka R.T."/>
            <person name="Cloud K."/>
            <person name="Hampton O."/>
            <person name="Hoffmaster A."/>
            <person name="Hill K.K."/>
            <person name="Keim P."/>
            <person name="Koehler T."/>
            <person name="Lamke G."/>
            <person name="Kumano S."/>
            <person name="Manter D."/>
            <person name="Martinez Y."/>
            <person name="Ricke D."/>
            <person name="Svensson R."/>
            <person name="Jackson P.J."/>
        </authorList>
    </citation>
    <scope>NUCLEOTIDE SEQUENCE [GENOMIC DNA]</scope>
    <source>
        <strain>Pasteur</strain>
    </source>
</reference>
<reference key="2">
    <citation type="journal article" date="2002" name="Science">
        <title>Comparative genome sequencing for discovery of novel polymorphisms in Bacillus anthracis.</title>
        <authorList>
            <person name="Read T.D."/>
            <person name="Salzberg S.L."/>
            <person name="Pop M."/>
            <person name="Shumway M.F."/>
            <person name="Umayam L."/>
            <person name="Jiang L."/>
            <person name="Holtzapple E."/>
            <person name="Busch J.D."/>
            <person name="Smith K.L."/>
            <person name="Schupp J.M."/>
            <person name="Solomon D."/>
            <person name="Keim P."/>
            <person name="Fraser C.M."/>
        </authorList>
    </citation>
    <scope>NUCLEOTIDE SEQUENCE [GENOMIC DNA]</scope>
    <source>
        <strain>Ames / isolate Florida / A2012</strain>
    </source>
</reference>
<reference key="3">
    <citation type="journal article" date="2009" name="J. Bacteriol.">
        <title>The complete genome sequence of Bacillus anthracis Ames 'Ancestor'.</title>
        <authorList>
            <person name="Ravel J."/>
            <person name="Jiang L."/>
            <person name="Stanley S.T."/>
            <person name="Wilson M.R."/>
            <person name="Decker R.S."/>
            <person name="Read T.D."/>
            <person name="Worsham P."/>
            <person name="Keim P.S."/>
            <person name="Salzberg S.L."/>
            <person name="Fraser-Liggett C.M."/>
            <person name="Rasko D.A."/>
        </authorList>
    </citation>
    <scope>NUCLEOTIDE SEQUENCE [LARGE SCALE GENOMIC DNA]</scope>
    <source>
        <strain>Ames ancestor</strain>
    </source>
</reference>
<gene>
    <name type="ordered locus">pXO2-40</name>
    <name type="ordered locus">BXB0041</name>
    <name type="ordered locus">GBAA_pXO2_0041</name>
</gene>
<dbReference type="EMBL" id="AF188935">
    <property type="protein sequence ID" value="AAF13645.1"/>
    <property type="molecule type" value="Genomic_DNA"/>
</dbReference>
<dbReference type="EMBL" id="AE011191">
    <property type="protein sequence ID" value="AAM26201.1"/>
    <property type="molecule type" value="Genomic_DNA"/>
</dbReference>
<dbReference type="EMBL" id="AE017335">
    <property type="protein sequence ID" value="AAT28971.2"/>
    <property type="molecule type" value="Genomic_DNA"/>
</dbReference>
<dbReference type="RefSeq" id="NP_053195.1">
    <property type="nucleotide sequence ID" value="NC_002146.1"/>
</dbReference>
<dbReference type="RefSeq" id="WP_000064258.1">
    <property type="nucleotide sequence ID" value="NZ_VTZL01000009.1"/>
</dbReference>
<dbReference type="SMR" id="Q9RMZ2"/>
<dbReference type="KEGG" id="banh:HYU01_29205"/>
<dbReference type="KEGG" id="bar:GBAA_pXO2_0041"/>
<dbReference type="HOGENOM" id="CLU_2044894_0_0_9"/>
<dbReference type="OMA" id="IRMPLET"/>
<dbReference type="Proteomes" id="UP000000594">
    <property type="component" value="Plasmid pXO2"/>
</dbReference>
<feature type="chain" id="PRO_0000216851" description="Uncharacterized protein pXO2-40/BXB0041/GBAA_pXO2_0041">
    <location>
        <begin position="1"/>
        <end position="128"/>
    </location>
</feature>
<feature type="region of interest" description="Disordered" evidence="1">
    <location>
        <begin position="1"/>
        <end position="50"/>
    </location>
</feature>
<feature type="compositionally biased region" description="Basic and acidic residues" evidence="1">
    <location>
        <begin position="18"/>
        <end position="36"/>
    </location>
</feature>
<name>Y6541_BACAN</name>
<keyword id="KW-0614">Plasmid</keyword>
<keyword id="KW-1185">Reference proteome</keyword>
<proteinExistence type="predicted"/>
<protein>
    <recommendedName>
        <fullName>Uncharacterized protein pXO2-40/BXB0041/GBAA_pXO2_0041</fullName>
    </recommendedName>
</protein>
<evidence type="ECO:0000256" key="1">
    <source>
        <dbReference type="SAM" id="MobiDB-lite"/>
    </source>
</evidence>
<organism>
    <name type="scientific">Bacillus anthracis</name>
    <dbReference type="NCBI Taxonomy" id="1392"/>
    <lineage>
        <taxon>Bacteria</taxon>
        <taxon>Bacillati</taxon>
        <taxon>Bacillota</taxon>
        <taxon>Bacilli</taxon>
        <taxon>Bacillales</taxon>
        <taxon>Bacillaceae</taxon>
        <taxon>Bacillus</taxon>
        <taxon>Bacillus cereus group</taxon>
    </lineage>
</organism>
<sequence>MSNEQGKGMGFFGNKGKPASEKKDEKKTKLDLDYKPDLNPSTPYDPTLPVKATLVNGDKRGTLRIPLETKHEFDALLEISEYQYTYELLGEMLDTWMKKLTPEQLRLFHASLENIKRKAAIKEAKKKK</sequence>
<accession>Q9RMZ2</accession>